<evidence type="ECO:0000250" key="1"/>
<evidence type="ECO:0000250" key="2">
    <source>
        <dbReference type="UniProtKB" id="P60301"/>
    </source>
</evidence>
<evidence type="ECO:0000250" key="3">
    <source>
        <dbReference type="UniProtKB" id="P60304"/>
    </source>
</evidence>
<evidence type="ECO:0000255" key="4"/>
<evidence type="ECO:0000305" key="5"/>
<accession>Q98962</accession>
<organism>
    <name type="scientific">Naja atra</name>
    <name type="common">Chinese cobra</name>
    <dbReference type="NCBI Taxonomy" id="8656"/>
    <lineage>
        <taxon>Eukaryota</taxon>
        <taxon>Metazoa</taxon>
        <taxon>Chordata</taxon>
        <taxon>Craniata</taxon>
        <taxon>Vertebrata</taxon>
        <taxon>Euteleostomi</taxon>
        <taxon>Lepidosauria</taxon>
        <taxon>Squamata</taxon>
        <taxon>Bifurcata</taxon>
        <taxon>Unidentata</taxon>
        <taxon>Episquamata</taxon>
        <taxon>Toxicofera</taxon>
        <taxon>Serpentes</taxon>
        <taxon>Colubroidea</taxon>
        <taxon>Elapidae</taxon>
        <taxon>Elapinae</taxon>
        <taxon>Naja</taxon>
    </lineage>
</organism>
<keyword id="KW-0123">Cardiotoxin</keyword>
<keyword id="KW-0204">Cytolysis</keyword>
<keyword id="KW-1015">Disulfide bond</keyword>
<keyword id="KW-0472">Membrane</keyword>
<keyword id="KW-0964">Secreted</keyword>
<keyword id="KW-0732">Signal</keyword>
<keyword id="KW-1052">Target cell membrane</keyword>
<keyword id="KW-1053">Target membrane</keyword>
<keyword id="KW-0800">Toxin</keyword>
<dbReference type="EMBL" id="U58490">
    <property type="protein sequence ID" value="AAB18386.1"/>
    <property type="molecule type" value="mRNA"/>
</dbReference>
<dbReference type="SMR" id="Q98962"/>
<dbReference type="GO" id="GO:0005576">
    <property type="term" value="C:extracellular region"/>
    <property type="evidence" value="ECO:0007669"/>
    <property type="project" value="UniProtKB-SubCell"/>
</dbReference>
<dbReference type="GO" id="GO:0016020">
    <property type="term" value="C:membrane"/>
    <property type="evidence" value="ECO:0007669"/>
    <property type="project" value="UniProtKB-KW"/>
</dbReference>
<dbReference type="GO" id="GO:0044218">
    <property type="term" value="C:other organism cell membrane"/>
    <property type="evidence" value="ECO:0007669"/>
    <property type="project" value="UniProtKB-KW"/>
</dbReference>
<dbReference type="GO" id="GO:0090729">
    <property type="term" value="F:toxin activity"/>
    <property type="evidence" value="ECO:0007669"/>
    <property type="project" value="UniProtKB-KW"/>
</dbReference>
<dbReference type="GO" id="GO:0031640">
    <property type="term" value="P:killing of cells of another organism"/>
    <property type="evidence" value="ECO:0007669"/>
    <property type="project" value="UniProtKB-KW"/>
</dbReference>
<dbReference type="CDD" id="cd00206">
    <property type="entry name" value="TFP_snake_toxin"/>
    <property type="match status" value="1"/>
</dbReference>
<dbReference type="FunFam" id="2.10.60.10:FF:000024">
    <property type="entry name" value="Cytotoxin 1"/>
    <property type="match status" value="1"/>
</dbReference>
<dbReference type="Gene3D" id="2.10.60.10">
    <property type="entry name" value="CD59"/>
    <property type="match status" value="1"/>
</dbReference>
<dbReference type="InterPro" id="IPR003572">
    <property type="entry name" value="Cytotoxin_Cobra"/>
</dbReference>
<dbReference type="InterPro" id="IPR003571">
    <property type="entry name" value="Snake_3FTx"/>
</dbReference>
<dbReference type="InterPro" id="IPR045860">
    <property type="entry name" value="Snake_toxin-like_sf"/>
</dbReference>
<dbReference type="InterPro" id="IPR018354">
    <property type="entry name" value="Snake_toxin_con_site"/>
</dbReference>
<dbReference type="InterPro" id="IPR054131">
    <property type="entry name" value="Toxin_cobra-type"/>
</dbReference>
<dbReference type="Pfam" id="PF21947">
    <property type="entry name" value="Toxin_cobra-type"/>
    <property type="match status" value="1"/>
</dbReference>
<dbReference type="PRINTS" id="PR00282">
    <property type="entry name" value="CYTOTOXIN"/>
</dbReference>
<dbReference type="SUPFAM" id="SSF57302">
    <property type="entry name" value="Snake toxin-like"/>
    <property type="match status" value="1"/>
</dbReference>
<dbReference type="PROSITE" id="PS00272">
    <property type="entry name" value="SNAKE_TOXIN"/>
    <property type="match status" value="1"/>
</dbReference>
<sequence length="81" mass="8927">MKTLLLTLVVVTIVCLDLGYTLKCNKLIPIASKTCPAGKNLCYKMFMVATPKVPVKRGCIDVCPKNSLLVKYVCCNTDRCN</sequence>
<comment type="function">
    <text evidence="2 3">Shows cytolytic activity on many different cells by forming pore in lipid membranes. In vivo, increases heart rate or kills the animal by cardiac arrest. In addition, it binds to heparin with high affinity, interacts with Kv channel-interacting protein 1 (KCNIP1) in a calcium-independent manner, and binds to integrin alpha-V/beta-3 (ITGAV/ITGB3) with moderate affinity.</text>
</comment>
<comment type="subunit">
    <text evidence="2">Monomer in solution; Homodimer and oligomer in the presence of negatively charged lipids forming a pore with a size ranging between 20 and 30 Angstroms.</text>
</comment>
<comment type="subcellular location">
    <subcellularLocation>
        <location evidence="1">Secreted</location>
    </subcellularLocation>
    <subcellularLocation>
        <location evidence="2">Target cell membrane</location>
    </subcellularLocation>
</comment>
<comment type="tissue specificity">
    <text evidence="5">Expressed by the venom gland.</text>
</comment>
<comment type="miscellaneous">
    <text evidence="5">Is classified as a P-type cytotoxin, since a proline residue stands at position 51 (Pro-31 in standard classification).</text>
</comment>
<comment type="similarity">
    <text evidence="5">Belongs to the three-finger toxin family. Short-chain subfamily. Type IA cytotoxin sub-subfamily.</text>
</comment>
<protein>
    <recommendedName>
        <fullName>Cytotoxin 3d</fullName>
    </recommendedName>
    <alternativeName>
        <fullName>Cardiotoxin 3d</fullName>
    </alternativeName>
</protein>
<feature type="signal peptide" evidence="4">
    <location>
        <begin position="1"/>
        <end position="21"/>
    </location>
</feature>
<feature type="chain" id="PRO_0000035374" description="Cytotoxin 3d">
    <location>
        <begin position="22"/>
        <end position="81"/>
    </location>
</feature>
<feature type="disulfide bond" evidence="2">
    <location>
        <begin position="24"/>
        <end position="42"/>
    </location>
</feature>
<feature type="disulfide bond" evidence="2">
    <location>
        <begin position="35"/>
        <end position="59"/>
    </location>
</feature>
<feature type="disulfide bond" evidence="2">
    <location>
        <begin position="63"/>
        <end position="74"/>
    </location>
</feature>
<feature type="disulfide bond" evidence="2">
    <location>
        <begin position="75"/>
        <end position="80"/>
    </location>
</feature>
<proteinExistence type="inferred from homology"/>
<reference key="1">
    <citation type="submission" date="1996-05" db="EMBL/GenBank/DDBJ databases">
        <authorList>
            <person name="Chu R.C."/>
            <person name="Yang C.-C."/>
        </authorList>
    </citation>
    <scope>NUCLEOTIDE SEQUENCE [MRNA]</scope>
    <source>
        <tissue>Venom gland</tissue>
    </source>
</reference>
<name>3SA3D_NAJAT</name>